<gene>
    <name evidence="1" type="primary">xseA</name>
    <name type="ordered locus">spyM18_1518</name>
</gene>
<feature type="chain" id="PRO_0000197896" description="Exodeoxyribonuclease 7 large subunit">
    <location>
        <begin position="1"/>
        <end position="446"/>
    </location>
</feature>
<sequence>MADYLTVTHLTKYLKLKFDRDPYLERVYLTGQVSNFRKRPTHQYFSLKDESAVIQATMWAGVYKKLGFDLEEGMKINVIGRVQLYEPSGSYSIVIEKAEPDGIGALALQFEQLKKKLTAEGYFEQKHKQPLPQFVSKIGVITSPSGAVIRDIITTVSRRFPGVEILLFPTKVQGDGAAQEVVANIRRANQREDLDLLIVGRGGGSIEDLWAFNEEIVVQAIFESQLPVISSVGHETDTTLADFVADRRAATPTAAAELATPITKTDLMSWIVERQNRSYQACLRRIKQRQEWVDKLSQSVIFRQPERLYDAYLQKIDRLSMTLMNTMKDRLSSAKENKVQLDHALANSQLQTKIERYQDRVATAKRLLMANMARQYDSQLARFEKAQDALLSLDVSRIIARGYAMIEKNQALVASVSQITKGDQLTIKMRDGQLDVEVKDVKNENI</sequence>
<accession>Q8P075</accession>
<organism>
    <name type="scientific">Streptococcus pyogenes serotype M18 (strain MGAS8232)</name>
    <dbReference type="NCBI Taxonomy" id="186103"/>
    <lineage>
        <taxon>Bacteria</taxon>
        <taxon>Bacillati</taxon>
        <taxon>Bacillota</taxon>
        <taxon>Bacilli</taxon>
        <taxon>Lactobacillales</taxon>
        <taxon>Streptococcaceae</taxon>
        <taxon>Streptococcus</taxon>
    </lineage>
</organism>
<evidence type="ECO:0000255" key="1">
    <source>
        <dbReference type="HAMAP-Rule" id="MF_00378"/>
    </source>
</evidence>
<name>EX7L_STRP8</name>
<dbReference type="EC" id="3.1.11.6" evidence="1"/>
<dbReference type="EMBL" id="AE009949">
    <property type="protein sequence ID" value="AAL98089.1"/>
    <property type="molecule type" value="Genomic_DNA"/>
</dbReference>
<dbReference type="RefSeq" id="WP_011017997.1">
    <property type="nucleotide sequence ID" value="NC_003485.1"/>
</dbReference>
<dbReference type="SMR" id="Q8P075"/>
<dbReference type="KEGG" id="spm:spyM18_1518"/>
<dbReference type="HOGENOM" id="CLU_023625_3_1_9"/>
<dbReference type="GO" id="GO:0005737">
    <property type="term" value="C:cytoplasm"/>
    <property type="evidence" value="ECO:0007669"/>
    <property type="project" value="UniProtKB-SubCell"/>
</dbReference>
<dbReference type="GO" id="GO:0009318">
    <property type="term" value="C:exodeoxyribonuclease VII complex"/>
    <property type="evidence" value="ECO:0007669"/>
    <property type="project" value="InterPro"/>
</dbReference>
<dbReference type="GO" id="GO:0008855">
    <property type="term" value="F:exodeoxyribonuclease VII activity"/>
    <property type="evidence" value="ECO:0007669"/>
    <property type="project" value="UniProtKB-UniRule"/>
</dbReference>
<dbReference type="GO" id="GO:0003676">
    <property type="term" value="F:nucleic acid binding"/>
    <property type="evidence" value="ECO:0007669"/>
    <property type="project" value="InterPro"/>
</dbReference>
<dbReference type="GO" id="GO:0006308">
    <property type="term" value="P:DNA catabolic process"/>
    <property type="evidence" value="ECO:0007669"/>
    <property type="project" value="UniProtKB-UniRule"/>
</dbReference>
<dbReference type="CDD" id="cd04489">
    <property type="entry name" value="ExoVII_LU_OBF"/>
    <property type="match status" value="1"/>
</dbReference>
<dbReference type="HAMAP" id="MF_00378">
    <property type="entry name" value="Exonuc_7_L"/>
    <property type="match status" value="1"/>
</dbReference>
<dbReference type="InterPro" id="IPR003753">
    <property type="entry name" value="Exonuc_VII_L"/>
</dbReference>
<dbReference type="InterPro" id="IPR020579">
    <property type="entry name" value="Exonuc_VII_lsu_C"/>
</dbReference>
<dbReference type="InterPro" id="IPR025824">
    <property type="entry name" value="OB-fold_nuc-bd_dom"/>
</dbReference>
<dbReference type="NCBIfam" id="TIGR00237">
    <property type="entry name" value="xseA"/>
    <property type="match status" value="1"/>
</dbReference>
<dbReference type="PANTHER" id="PTHR30008">
    <property type="entry name" value="EXODEOXYRIBONUCLEASE 7 LARGE SUBUNIT"/>
    <property type="match status" value="1"/>
</dbReference>
<dbReference type="PANTHER" id="PTHR30008:SF0">
    <property type="entry name" value="EXODEOXYRIBONUCLEASE 7 LARGE SUBUNIT"/>
    <property type="match status" value="1"/>
</dbReference>
<dbReference type="Pfam" id="PF02601">
    <property type="entry name" value="Exonuc_VII_L"/>
    <property type="match status" value="1"/>
</dbReference>
<dbReference type="Pfam" id="PF13742">
    <property type="entry name" value="tRNA_anti_2"/>
    <property type="match status" value="1"/>
</dbReference>
<reference key="1">
    <citation type="journal article" date="2002" name="Proc. Natl. Acad. Sci. U.S.A.">
        <title>Genome sequence and comparative microarray analysis of serotype M18 group A Streptococcus strains associated with acute rheumatic fever outbreaks.</title>
        <authorList>
            <person name="Smoot J.C."/>
            <person name="Barbian K.D."/>
            <person name="Van Gompel J.J."/>
            <person name="Smoot L.M."/>
            <person name="Chaussee M.S."/>
            <person name="Sylva G.L."/>
            <person name="Sturdevant D.E."/>
            <person name="Ricklefs S.M."/>
            <person name="Porcella S.F."/>
            <person name="Parkins L.D."/>
            <person name="Beres S.B."/>
            <person name="Campbell D.S."/>
            <person name="Smith T.M."/>
            <person name="Zhang Q."/>
            <person name="Kapur V."/>
            <person name="Daly J.A."/>
            <person name="Veasy L.G."/>
            <person name="Musser J.M."/>
        </authorList>
    </citation>
    <scope>NUCLEOTIDE SEQUENCE [LARGE SCALE GENOMIC DNA]</scope>
    <source>
        <strain>MGAS8232</strain>
    </source>
</reference>
<protein>
    <recommendedName>
        <fullName evidence="1">Exodeoxyribonuclease 7 large subunit</fullName>
        <ecNumber evidence="1">3.1.11.6</ecNumber>
    </recommendedName>
    <alternativeName>
        <fullName evidence="1">Exodeoxyribonuclease VII large subunit</fullName>
        <shortName evidence="1">Exonuclease VII large subunit</shortName>
    </alternativeName>
</protein>
<keyword id="KW-0963">Cytoplasm</keyword>
<keyword id="KW-0269">Exonuclease</keyword>
<keyword id="KW-0378">Hydrolase</keyword>
<keyword id="KW-0540">Nuclease</keyword>
<comment type="function">
    <text evidence="1">Bidirectionally degrades single-stranded DNA into large acid-insoluble oligonucleotides, which are then degraded further into small acid-soluble oligonucleotides.</text>
</comment>
<comment type="catalytic activity">
    <reaction evidence="1">
        <text>Exonucleolytic cleavage in either 5'- to 3'- or 3'- to 5'-direction to yield nucleoside 5'-phosphates.</text>
        <dbReference type="EC" id="3.1.11.6"/>
    </reaction>
</comment>
<comment type="subunit">
    <text evidence="1">Heterooligomer composed of large and small subunits.</text>
</comment>
<comment type="subcellular location">
    <subcellularLocation>
        <location evidence="1">Cytoplasm</location>
    </subcellularLocation>
</comment>
<comment type="similarity">
    <text evidence="1">Belongs to the XseA family.</text>
</comment>
<proteinExistence type="inferred from homology"/>